<name>APT_CORJK</name>
<sequence>MRPAKPPQSKERKRSKSLTSADHDNSPQRAETAASALRQRIRVVPDFPSRGIVFEDLTPVLADPHSFKLLVQDLANHCRNFDIDLIGGLDARGFLLGSAVAYELGVGILAVRKGGKLPPPVHHVDYSLEYGTASLEIPADNAIPLQGKNVFLIDDVLATGGTLSASRELLENAGANVCGLGVVLEVSALDGRDRLKDLPLYVVDQAG</sequence>
<organism>
    <name type="scientific">Corynebacterium jeikeium (strain K411)</name>
    <dbReference type="NCBI Taxonomy" id="306537"/>
    <lineage>
        <taxon>Bacteria</taxon>
        <taxon>Bacillati</taxon>
        <taxon>Actinomycetota</taxon>
        <taxon>Actinomycetes</taxon>
        <taxon>Mycobacteriales</taxon>
        <taxon>Corynebacteriaceae</taxon>
        <taxon>Corynebacterium</taxon>
    </lineage>
</organism>
<gene>
    <name evidence="1" type="primary">apt</name>
    <name type="ordered locus">jk1049</name>
</gene>
<dbReference type="EC" id="2.4.2.7" evidence="1"/>
<dbReference type="EMBL" id="CR931997">
    <property type="protein sequence ID" value="CAI37213.1"/>
    <property type="molecule type" value="Genomic_DNA"/>
</dbReference>
<dbReference type="RefSeq" id="WP_011273614.1">
    <property type="nucleotide sequence ID" value="NC_007164.1"/>
</dbReference>
<dbReference type="SMR" id="Q4JVE4"/>
<dbReference type="STRING" id="306537.jk1049"/>
<dbReference type="KEGG" id="cjk:jk1049"/>
<dbReference type="eggNOG" id="COG0503">
    <property type="taxonomic scope" value="Bacteria"/>
</dbReference>
<dbReference type="HOGENOM" id="CLU_063339_3_3_11"/>
<dbReference type="OrthoDB" id="9803963at2"/>
<dbReference type="UniPathway" id="UPA00588">
    <property type="reaction ID" value="UER00646"/>
</dbReference>
<dbReference type="Proteomes" id="UP000000545">
    <property type="component" value="Chromosome"/>
</dbReference>
<dbReference type="GO" id="GO:0005737">
    <property type="term" value="C:cytoplasm"/>
    <property type="evidence" value="ECO:0007669"/>
    <property type="project" value="UniProtKB-SubCell"/>
</dbReference>
<dbReference type="GO" id="GO:0002055">
    <property type="term" value="F:adenine binding"/>
    <property type="evidence" value="ECO:0007669"/>
    <property type="project" value="TreeGrafter"/>
</dbReference>
<dbReference type="GO" id="GO:0003999">
    <property type="term" value="F:adenine phosphoribosyltransferase activity"/>
    <property type="evidence" value="ECO:0007669"/>
    <property type="project" value="UniProtKB-UniRule"/>
</dbReference>
<dbReference type="GO" id="GO:0016208">
    <property type="term" value="F:AMP binding"/>
    <property type="evidence" value="ECO:0007669"/>
    <property type="project" value="TreeGrafter"/>
</dbReference>
<dbReference type="GO" id="GO:0006168">
    <property type="term" value="P:adenine salvage"/>
    <property type="evidence" value="ECO:0007669"/>
    <property type="project" value="InterPro"/>
</dbReference>
<dbReference type="GO" id="GO:0044209">
    <property type="term" value="P:AMP salvage"/>
    <property type="evidence" value="ECO:0007669"/>
    <property type="project" value="UniProtKB-UniRule"/>
</dbReference>
<dbReference type="GO" id="GO:0006166">
    <property type="term" value="P:purine ribonucleoside salvage"/>
    <property type="evidence" value="ECO:0007669"/>
    <property type="project" value="UniProtKB-KW"/>
</dbReference>
<dbReference type="CDD" id="cd06223">
    <property type="entry name" value="PRTases_typeI"/>
    <property type="match status" value="1"/>
</dbReference>
<dbReference type="FunFam" id="3.40.50.2020:FF:000021">
    <property type="entry name" value="Adenine phosphoribosyltransferase"/>
    <property type="match status" value="1"/>
</dbReference>
<dbReference type="Gene3D" id="3.40.50.2020">
    <property type="match status" value="1"/>
</dbReference>
<dbReference type="HAMAP" id="MF_00004">
    <property type="entry name" value="Aden_phosphoribosyltr"/>
    <property type="match status" value="1"/>
</dbReference>
<dbReference type="InterPro" id="IPR005764">
    <property type="entry name" value="Ade_phspho_trans"/>
</dbReference>
<dbReference type="InterPro" id="IPR000836">
    <property type="entry name" value="PRibTrfase_dom"/>
</dbReference>
<dbReference type="InterPro" id="IPR029057">
    <property type="entry name" value="PRTase-like"/>
</dbReference>
<dbReference type="InterPro" id="IPR050054">
    <property type="entry name" value="UPRTase/APRTase"/>
</dbReference>
<dbReference type="NCBIfam" id="NF002634">
    <property type="entry name" value="PRK02304.1-3"/>
    <property type="match status" value="1"/>
</dbReference>
<dbReference type="NCBIfam" id="NF002636">
    <property type="entry name" value="PRK02304.1-5"/>
    <property type="match status" value="1"/>
</dbReference>
<dbReference type="PANTHER" id="PTHR32315">
    <property type="entry name" value="ADENINE PHOSPHORIBOSYLTRANSFERASE"/>
    <property type="match status" value="1"/>
</dbReference>
<dbReference type="PANTHER" id="PTHR32315:SF3">
    <property type="entry name" value="ADENINE PHOSPHORIBOSYLTRANSFERASE"/>
    <property type="match status" value="1"/>
</dbReference>
<dbReference type="Pfam" id="PF00156">
    <property type="entry name" value="Pribosyltran"/>
    <property type="match status" value="1"/>
</dbReference>
<dbReference type="SUPFAM" id="SSF53271">
    <property type="entry name" value="PRTase-like"/>
    <property type="match status" value="1"/>
</dbReference>
<evidence type="ECO:0000255" key="1">
    <source>
        <dbReference type="HAMAP-Rule" id="MF_00004"/>
    </source>
</evidence>
<evidence type="ECO:0000256" key="2">
    <source>
        <dbReference type="SAM" id="MobiDB-lite"/>
    </source>
</evidence>
<keyword id="KW-0963">Cytoplasm</keyword>
<keyword id="KW-0328">Glycosyltransferase</keyword>
<keyword id="KW-0660">Purine salvage</keyword>
<keyword id="KW-1185">Reference proteome</keyword>
<keyword id="KW-0808">Transferase</keyword>
<accession>Q4JVE4</accession>
<proteinExistence type="inferred from homology"/>
<protein>
    <recommendedName>
        <fullName evidence="1">Adenine phosphoribosyltransferase</fullName>
        <shortName evidence="1">APRT</shortName>
        <ecNumber evidence="1">2.4.2.7</ecNumber>
    </recommendedName>
</protein>
<feature type="chain" id="PRO_0000321358" description="Adenine phosphoribosyltransferase">
    <location>
        <begin position="1"/>
        <end position="207"/>
    </location>
</feature>
<feature type="region of interest" description="Disordered" evidence="2">
    <location>
        <begin position="1"/>
        <end position="33"/>
    </location>
</feature>
<reference key="1">
    <citation type="journal article" date="2005" name="J. Bacteriol.">
        <title>Complete genome sequence and analysis of the multiresistant nosocomial pathogen Corynebacterium jeikeium K411, a lipid-requiring bacterium of the human skin flora.</title>
        <authorList>
            <person name="Tauch A."/>
            <person name="Kaiser O."/>
            <person name="Hain T."/>
            <person name="Goesmann A."/>
            <person name="Weisshaar B."/>
            <person name="Albersmeier A."/>
            <person name="Bekel T."/>
            <person name="Bischoff N."/>
            <person name="Brune I."/>
            <person name="Chakraborty T."/>
            <person name="Kalinowski J."/>
            <person name="Meyer F."/>
            <person name="Rupp O."/>
            <person name="Schneiker S."/>
            <person name="Viehoever P."/>
            <person name="Puehler A."/>
        </authorList>
    </citation>
    <scope>NUCLEOTIDE SEQUENCE [LARGE SCALE GENOMIC DNA]</scope>
    <source>
        <strain>K411</strain>
    </source>
</reference>
<comment type="function">
    <text evidence="1">Catalyzes a salvage reaction resulting in the formation of AMP, that is energically less costly than de novo synthesis.</text>
</comment>
<comment type="catalytic activity">
    <reaction evidence="1">
        <text>AMP + diphosphate = 5-phospho-alpha-D-ribose 1-diphosphate + adenine</text>
        <dbReference type="Rhea" id="RHEA:16609"/>
        <dbReference type="ChEBI" id="CHEBI:16708"/>
        <dbReference type="ChEBI" id="CHEBI:33019"/>
        <dbReference type="ChEBI" id="CHEBI:58017"/>
        <dbReference type="ChEBI" id="CHEBI:456215"/>
        <dbReference type="EC" id="2.4.2.7"/>
    </reaction>
</comment>
<comment type="pathway">
    <text evidence="1">Purine metabolism; AMP biosynthesis via salvage pathway; AMP from adenine: step 1/1.</text>
</comment>
<comment type="subunit">
    <text evidence="1">Homodimer.</text>
</comment>
<comment type="subcellular location">
    <subcellularLocation>
        <location evidence="1">Cytoplasm</location>
    </subcellularLocation>
</comment>
<comment type="similarity">
    <text evidence="1">Belongs to the purine/pyrimidine phosphoribosyltransferase family.</text>
</comment>